<keyword id="KW-0067">ATP-binding</keyword>
<keyword id="KW-0418">Kinase</keyword>
<keyword id="KW-0547">Nucleotide-binding</keyword>
<keyword id="KW-0597">Phosphoprotein</keyword>
<keyword id="KW-1185">Reference proteome</keyword>
<keyword id="KW-0723">Serine/threonine-protein kinase</keyword>
<keyword id="KW-0346">Stress response</keyword>
<keyword id="KW-0808">Transferase</keyword>
<evidence type="ECO:0000250" key="1">
    <source>
        <dbReference type="UniProtKB" id="Q940H6"/>
    </source>
</evidence>
<evidence type="ECO:0000255" key="2">
    <source>
        <dbReference type="PROSITE-ProRule" id="PRU00159"/>
    </source>
</evidence>
<evidence type="ECO:0000269" key="3">
    <source>
    </source>
</evidence>
<evidence type="ECO:0000303" key="4">
    <source>
    </source>
</evidence>
<evidence type="ECO:0000305" key="5"/>
<evidence type="ECO:0000312" key="6">
    <source>
        <dbReference type="EMBL" id="EDQ57933.1"/>
    </source>
</evidence>
<gene>
    <name evidence="4" type="primary">SRK2A</name>
    <name evidence="6" type="ORF">PHYPADRAFT_194508</name>
</gene>
<reference evidence="6" key="1">
    <citation type="journal article" date="2008" name="Science">
        <title>The Physcomitrella genome reveals evolutionary insights into the conquest of land by plants.</title>
        <authorList>
            <person name="Rensing S.A."/>
            <person name="Lang D."/>
            <person name="Zimmer A.D."/>
            <person name="Terry A."/>
            <person name="Salamov A."/>
            <person name="Shapiro H."/>
            <person name="Nishiyama T."/>
            <person name="Perroud P.-F."/>
            <person name="Lindquist E.A."/>
            <person name="Kamisugi Y."/>
            <person name="Tanahashi T."/>
            <person name="Sakakibara K."/>
            <person name="Fujita T."/>
            <person name="Oishi K."/>
            <person name="Shin-I T."/>
            <person name="Kuroki Y."/>
            <person name="Toyoda A."/>
            <person name="Suzuki Y."/>
            <person name="Hashimoto S.-I."/>
            <person name="Yamaguchi K."/>
            <person name="Sugano S."/>
            <person name="Kohara Y."/>
            <person name="Fujiyama A."/>
            <person name="Anterola A."/>
            <person name="Aoki S."/>
            <person name="Ashton N."/>
            <person name="Barbazuk W.B."/>
            <person name="Barker E."/>
            <person name="Bennetzen J.L."/>
            <person name="Blankenship R."/>
            <person name="Cho S.H."/>
            <person name="Dutcher S.K."/>
            <person name="Estelle M."/>
            <person name="Fawcett J.A."/>
            <person name="Gundlach H."/>
            <person name="Hanada K."/>
            <person name="Heyl A."/>
            <person name="Hicks K.A."/>
            <person name="Hughes J."/>
            <person name="Lohr M."/>
            <person name="Mayer K."/>
            <person name="Melkozernov A."/>
            <person name="Murata T."/>
            <person name="Nelson D.R."/>
            <person name="Pils B."/>
            <person name="Prigge M."/>
            <person name="Reiss B."/>
            <person name="Renner T."/>
            <person name="Rombauts S."/>
            <person name="Rushton P.J."/>
            <person name="Sanderfoot A."/>
            <person name="Schween G."/>
            <person name="Shiu S.-H."/>
            <person name="Stueber K."/>
            <person name="Theodoulou F.L."/>
            <person name="Tu H."/>
            <person name="Van de Peer Y."/>
            <person name="Verrier P.J."/>
            <person name="Waters E."/>
            <person name="Wood A."/>
            <person name="Yang L."/>
            <person name="Cove D."/>
            <person name="Cuming A.C."/>
            <person name="Hasebe M."/>
            <person name="Lucas S."/>
            <person name="Mishler B.D."/>
            <person name="Reski R."/>
            <person name="Grigoriev I.V."/>
            <person name="Quatrano R.S."/>
            <person name="Boore J.L."/>
        </authorList>
    </citation>
    <scope>NUCLEOTIDE SEQUENCE [LARGE SCALE GENOMIC DNA]</scope>
    <source>
        <strain>cv. Gransden 2004</strain>
    </source>
</reference>
<reference key="2">
    <citation type="journal article" date="2016" name="Plant Cell">
        <title>An innate immunity pathway in the Moss Physcomitrella patens.</title>
        <authorList>
            <person name="Bressendorff S."/>
            <person name="Azevedo R."/>
            <person name="Kenchappa C.S."/>
            <person name="Ponce de Leon I."/>
            <person name="Olsen J.V."/>
            <person name="Rasmussen M.W."/>
            <person name="Erbs G."/>
            <person name="Newman M.A."/>
            <person name="Petersen M."/>
            <person name="Mundy J."/>
        </authorList>
    </citation>
    <scope>FUNCTION</scope>
    <scope>CATALYTIC ACTIVITY</scope>
    <scope>ACTIVITY REGULATION</scope>
    <scope>INDUCTION</scope>
    <scope>DISRUPTION PHENOTYPE</scope>
</reference>
<feature type="chain" id="PRO_0000443380" description="Serine/threonine-protein kinase SRK2A">
    <location>
        <begin position="1"/>
        <end position="349"/>
    </location>
</feature>
<feature type="domain" description="Protein kinase" evidence="2">
    <location>
        <begin position="12"/>
        <end position="268"/>
    </location>
</feature>
<feature type="region of interest" description="Activation loop" evidence="1">
    <location>
        <begin position="151"/>
        <end position="177"/>
    </location>
</feature>
<feature type="active site" description="Proton acceptor" evidence="2">
    <location>
        <position position="131"/>
    </location>
</feature>
<feature type="binding site" evidence="2">
    <location>
        <begin position="18"/>
        <end position="26"/>
    </location>
    <ligand>
        <name>ATP</name>
        <dbReference type="ChEBI" id="CHEBI:30616"/>
    </ligand>
</feature>
<feature type="binding site" evidence="2">
    <location>
        <position position="41"/>
    </location>
    <ligand>
        <name>ATP</name>
        <dbReference type="ChEBI" id="CHEBI:30616"/>
    </ligand>
</feature>
<proteinExistence type="evidence at protein level"/>
<name>SRK2A_PHYPA</name>
<comment type="function">
    <text evidence="3">Involved in early responses to osmotic stress.</text>
</comment>
<comment type="catalytic activity">
    <reaction evidence="3">
        <text>L-seryl-[protein] + ATP = O-phospho-L-seryl-[protein] + ADP + H(+)</text>
        <dbReference type="Rhea" id="RHEA:17989"/>
        <dbReference type="Rhea" id="RHEA-COMP:9863"/>
        <dbReference type="Rhea" id="RHEA-COMP:11604"/>
        <dbReference type="ChEBI" id="CHEBI:15378"/>
        <dbReference type="ChEBI" id="CHEBI:29999"/>
        <dbReference type="ChEBI" id="CHEBI:30616"/>
        <dbReference type="ChEBI" id="CHEBI:83421"/>
        <dbReference type="ChEBI" id="CHEBI:456216"/>
        <dbReference type="EC" id="2.7.11.1"/>
    </reaction>
</comment>
<comment type="catalytic activity">
    <reaction evidence="3">
        <text>L-threonyl-[protein] + ATP = O-phospho-L-threonyl-[protein] + ADP + H(+)</text>
        <dbReference type="Rhea" id="RHEA:46608"/>
        <dbReference type="Rhea" id="RHEA-COMP:11060"/>
        <dbReference type="Rhea" id="RHEA-COMP:11605"/>
        <dbReference type="ChEBI" id="CHEBI:15378"/>
        <dbReference type="ChEBI" id="CHEBI:30013"/>
        <dbReference type="ChEBI" id="CHEBI:30616"/>
        <dbReference type="ChEBI" id="CHEBI:61977"/>
        <dbReference type="ChEBI" id="CHEBI:456216"/>
        <dbReference type="EC" id="2.7.11.1"/>
    </reaction>
</comment>
<comment type="activity regulation">
    <text evidence="3">Activated by osmotic stress and by abscisic acid (ABA). Activation by NaCl is dependent on ABA.</text>
</comment>
<comment type="induction">
    <text evidence="3">Up-regulated in response to NaCl treatment.</text>
</comment>
<comment type="disruption phenotype">
    <text evidence="3">Significantly reduced levels of SnRK2 proteins activated by NaCl or abscisic acid (ABA) compared with wild-type.</text>
</comment>
<comment type="similarity">
    <text evidence="5">Belongs to the protein kinase superfamily. Ser/Thr protein kinase family.</text>
</comment>
<organism>
    <name type="scientific">Physcomitrium patens</name>
    <name type="common">Spreading-leaved earth moss</name>
    <name type="synonym">Physcomitrella patens</name>
    <dbReference type="NCBI Taxonomy" id="3218"/>
    <lineage>
        <taxon>Eukaryota</taxon>
        <taxon>Viridiplantae</taxon>
        <taxon>Streptophyta</taxon>
        <taxon>Embryophyta</taxon>
        <taxon>Bryophyta</taxon>
        <taxon>Bryophytina</taxon>
        <taxon>Bryopsida</taxon>
        <taxon>Funariidae</taxon>
        <taxon>Funariales</taxon>
        <taxon>Funariaceae</taxon>
        <taxon>Physcomitrium</taxon>
    </lineage>
</organism>
<sequence>MDIPSMHDHDRYELVKDIGSGNFGVARLMRDKKTRELVAVKYIERGEKIDENVQREIINHRSLRHPNIVRFKEVMLTPTHLAIVMEYAAGGELFERICNAGRFSEDEARFFFQQLISGVSYCHSMQICHRDLKLENTLLDGSPAPRLKICDFGYSKSSLLHSQPKSTVGTPAYIAPEVLSKKEYDGKIADVWSCGVTLYVMLVGAYPFEDPEDPRNFRKTIGRILSVQYSIPDYVHISVECRHLLSRIFVANPAKRINIQEIKNHEWFLKNLPADLVDLADRSYDFEDPNHPPQSIEEIMRIISEARVLGTGATGDYFGDSVDDMDLENDVDPDADPDVGSSGEFVCAM</sequence>
<accession>A9TF79</accession>
<protein>
    <recommendedName>
        <fullName evidence="4">Serine/threonine-protein kinase SRK2A</fullName>
        <ecNumber evidence="3">2.7.11.1</ecNumber>
    </recommendedName>
    <alternativeName>
        <fullName evidence="5">SNF1-related kinase 2A</fullName>
        <shortName evidence="4">PpSnRK2A</shortName>
    </alternativeName>
</protein>
<dbReference type="EC" id="2.7.11.1" evidence="3"/>
<dbReference type="EMBL" id="DS545107">
    <property type="protein sequence ID" value="EDQ57933.1"/>
    <property type="molecule type" value="Genomic_DNA"/>
</dbReference>
<dbReference type="RefSeq" id="XP_001777278.1">
    <property type="nucleotide sequence ID" value="XM_001777226.1"/>
</dbReference>
<dbReference type="SMR" id="A9TF79"/>
<dbReference type="FunCoup" id="A9TF79">
    <property type="interactions" value="1711"/>
</dbReference>
<dbReference type="PaxDb" id="3218-PP1S218_59V6.1"/>
<dbReference type="EnsemblPlants" id="Pp3c5_21160V3.1">
    <property type="protein sequence ID" value="Pp3c5_21160V3.1"/>
    <property type="gene ID" value="Pp3c5_21160"/>
</dbReference>
<dbReference type="EnsemblPlants" id="Pp3c5_21160V3.3">
    <property type="protein sequence ID" value="Pp3c5_21160V3.3"/>
    <property type="gene ID" value="Pp3c5_21160"/>
</dbReference>
<dbReference type="Gramene" id="Pp3c5_21160V3.1">
    <property type="protein sequence ID" value="Pp3c5_21160V3.1"/>
    <property type="gene ID" value="Pp3c5_21160"/>
</dbReference>
<dbReference type="Gramene" id="Pp3c5_21160V3.3">
    <property type="protein sequence ID" value="Pp3c5_21160V3.3"/>
    <property type="gene ID" value="Pp3c5_21160"/>
</dbReference>
<dbReference type="eggNOG" id="KOG0583">
    <property type="taxonomic scope" value="Eukaryota"/>
</dbReference>
<dbReference type="HOGENOM" id="CLU_000288_63_0_1"/>
<dbReference type="InParanoid" id="A9TF79"/>
<dbReference type="OMA" id="VEYCHEQ"/>
<dbReference type="OrthoDB" id="193931at2759"/>
<dbReference type="Proteomes" id="UP000006727">
    <property type="component" value="Chromosome 5"/>
</dbReference>
<dbReference type="GO" id="GO:0005524">
    <property type="term" value="F:ATP binding"/>
    <property type="evidence" value="ECO:0007669"/>
    <property type="project" value="UniProtKB-KW"/>
</dbReference>
<dbReference type="GO" id="GO:0106310">
    <property type="term" value="F:protein serine kinase activity"/>
    <property type="evidence" value="ECO:0007669"/>
    <property type="project" value="RHEA"/>
</dbReference>
<dbReference type="GO" id="GO:0004674">
    <property type="term" value="F:protein serine/threonine kinase activity"/>
    <property type="evidence" value="ECO:0000318"/>
    <property type="project" value="GO_Central"/>
</dbReference>
<dbReference type="CDD" id="cd14662">
    <property type="entry name" value="STKc_SnRK2"/>
    <property type="match status" value="1"/>
</dbReference>
<dbReference type="FunFam" id="1.10.510.10:FF:000085">
    <property type="entry name" value="Serine/threonine-protein kinase SRK2E"/>
    <property type="match status" value="1"/>
</dbReference>
<dbReference type="FunFam" id="3.30.200.20:FF:000045">
    <property type="entry name" value="Serine/threonine-protein kinase SRK2E"/>
    <property type="match status" value="1"/>
</dbReference>
<dbReference type="Gene3D" id="3.30.200.20">
    <property type="entry name" value="Phosphorylase Kinase, domain 1"/>
    <property type="match status" value="1"/>
</dbReference>
<dbReference type="Gene3D" id="1.10.510.10">
    <property type="entry name" value="Transferase(Phosphotransferase) domain 1"/>
    <property type="match status" value="1"/>
</dbReference>
<dbReference type="InterPro" id="IPR011009">
    <property type="entry name" value="Kinase-like_dom_sf"/>
</dbReference>
<dbReference type="InterPro" id="IPR000719">
    <property type="entry name" value="Prot_kinase_dom"/>
</dbReference>
<dbReference type="InterPro" id="IPR017441">
    <property type="entry name" value="Protein_kinase_ATP_BS"/>
</dbReference>
<dbReference type="InterPro" id="IPR008271">
    <property type="entry name" value="Ser/Thr_kinase_AS"/>
</dbReference>
<dbReference type="PANTHER" id="PTHR24343">
    <property type="entry name" value="SERINE/THREONINE KINASE"/>
    <property type="match status" value="1"/>
</dbReference>
<dbReference type="PANTHER" id="PTHR24343:SF509">
    <property type="entry name" value="SERINE_THREONINE-PROTEIN KINASE SRK2E"/>
    <property type="match status" value="1"/>
</dbReference>
<dbReference type="Pfam" id="PF00069">
    <property type="entry name" value="Pkinase"/>
    <property type="match status" value="1"/>
</dbReference>
<dbReference type="SMART" id="SM00220">
    <property type="entry name" value="S_TKc"/>
    <property type="match status" value="1"/>
</dbReference>
<dbReference type="SUPFAM" id="SSF56112">
    <property type="entry name" value="Protein kinase-like (PK-like)"/>
    <property type="match status" value="1"/>
</dbReference>
<dbReference type="PROSITE" id="PS00107">
    <property type="entry name" value="PROTEIN_KINASE_ATP"/>
    <property type="match status" value="1"/>
</dbReference>
<dbReference type="PROSITE" id="PS50011">
    <property type="entry name" value="PROTEIN_KINASE_DOM"/>
    <property type="match status" value="1"/>
</dbReference>
<dbReference type="PROSITE" id="PS00108">
    <property type="entry name" value="PROTEIN_KINASE_ST"/>
    <property type="match status" value="1"/>
</dbReference>